<protein>
    <recommendedName>
        <fullName evidence="1">DNA-directed RNA polymerase subunit alpha</fullName>
        <shortName evidence="1">RNAP subunit alpha</shortName>
        <ecNumber evidence="1">2.7.7.6</ecNumber>
    </recommendedName>
    <alternativeName>
        <fullName evidence="1">RNA polymerase subunit alpha</fullName>
    </alternativeName>
    <alternativeName>
        <fullName evidence="1">Transcriptase subunit alpha</fullName>
    </alternativeName>
</protein>
<gene>
    <name evidence="1" type="primary">rpoA</name>
    <name type="ordered locus">CKR_0211</name>
</gene>
<feature type="chain" id="PRO_1000196632" description="DNA-directed RNA polymerase subunit alpha">
    <location>
        <begin position="1"/>
        <end position="315"/>
    </location>
</feature>
<feature type="region of interest" description="Alpha N-terminal domain (alpha-NTD)" evidence="1">
    <location>
        <begin position="1"/>
        <end position="228"/>
    </location>
</feature>
<feature type="region of interest" description="Alpha C-terminal domain (alpha-CTD)" evidence="1">
    <location>
        <begin position="245"/>
        <end position="315"/>
    </location>
</feature>
<proteinExistence type="inferred from homology"/>
<comment type="function">
    <text evidence="1">DNA-dependent RNA polymerase catalyzes the transcription of DNA into RNA using the four ribonucleoside triphosphates as substrates.</text>
</comment>
<comment type="catalytic activity">
    <reaction evidence="1">
        <text>RNA(n) + a ribonucleoside 5'-triphosphate = RNA(n+1) + diphosphate</text>
        <dbReference type="Rhea" id="RHEA:21248"/>
        <dbReference type="Rhea" id="RHEA-COMP:14527"/>
        <dbReference type="Rhea" id="RHEA-COMP:17342"/>
        <dbReference type="ChEBI" id="CHEBI:33019"/>
        <dbReference type="ChEBI" id="CHEBI:61557"/>
        <dbReference type="ChEBI" id="CHEBI:140395"/>
        <dbReference type="EC" id="2.7.7.6"/>
    </reaction>
</comment>
<comment type="subunit">
    <text evidence="1">Homodimer. The RNAP catalytic core consists of 2 alpha, 1 beta, 1 beta' and 1 omega subunit. When a sigma factor is associated with the core the holoenzyme is formed, which can initiate transcription.</text>
</comment>
<comment type="domain">
    <text evidence="1">The N-terminal domain is essential for RNAP assembly and basal transcription, whereas the C-terminal domain is involved in interaction with transcriptional regulators and with upstream promoter elements.</text>
</comment>
<comment type="similarity">
    <text evidence="1">Belongs to the RNA polymerase alpha chain family.</text>
</comment>
<sequence>MLEIEKPKIECVETSEDGNYGKFVVEPLERGYGTTLGNALRRILLSSLPGVAASHVKIDGVLHEFSTVRGVKEDVSELILNIKELALKMNGDGTKTIYIDAQGPGEVVAGDIKTDGDVEIINGELHIATLDENSRLYMEITVNGGRGYVSQRRNKFEDMPIGTIPVDSIYTPIKRVNFNVENTRVGQITDYDKLSLEVWTNGTILPDEAVSLSAKILIEHFKLFMTLTDHANNVEIMVEKEEDKKEKVLEMAIEELDLSVRSYNCLKRAGINTVQELTERTMDDMMKVRNLGKKSLEEVEQKLDTLGLSLKQNED</sequence>
<evidence type="ECO:0000255" key="1">
    <source>
        <dbReference type="HAMAP-Rule" id="MF_00059"/>
    </source>
</evidence>
<organism>
    <name type="scientific">Clostridium kluyveri (strain NBRC 12016)</name>
    <dbReference type="NCBI Taxonomy" id="583346"/>
    <lineage>
        <taxon>Bacteria</taxon>
        <taxon>Bacillati</taxon>
        <taxon>Bacillota</taxon>
        <taxon>Clostridia</taxon>
        <taxon>Eubacteriales</taxon>
        <taxon>Clostridiaceae</taxon>
        <taxon>Clostridium</taxon>
    </lineage>
</organism>
<reference key="1">
    <citation type="submission" date="2005-09" db="EMBL/GenBank/DDBJ databases">
        <title>Complete genome sequence of Clostridium kluyveri and comparative genomics of Clostridia species.</title>
        <authorList>
            <person name="Inui M."/>
            <person name="Nonaka H."/>
            <person name="Shinoda Y."/>
            <person name="Ikenaga Y."/>
            <person name="Abe M."/>
            <person name="Naito K."/>
            <person name="Vertes A.A."/>
            <person name="Yukawa H."/>
        </authorList>
    </citation>
    <scope>NUCLEOTIDE SEQUENCE [LARGE SCALE GENOMIC DNA]</scope>
    <source>
        <strain>NBRC 12016</strain>
    </source>
</reference>
<name>RPOA_CLOK1</name>
<dbReference type="EC" id="2.7.7.6" evidence="1"/>
<dbReference type="EMBL" id="AP009049">
    <property type="protein sequence ID" value="BAH05262.1"/>
    <property type="molecule type" value="Genomic_DNA"/>
</dbReference>
<dbReference type="RefSeq" id="WP_011988831.1">
    <property type="nucleotide sequence ID" value="NC_011837.1"/>
</dbReference>
<dbReference type="SMR" id="B9DYD7"/>
<dbReference type="KEGG" id="ckr:CKR_0211"/>
<dbReference type="HOGENOM" id="CLU_053084_0_1_9"/>
<dbReference type="Proteomes" id="UP000007969">
    <property type="component" value="Chromosome"/>
</dbReference>
<dbReference type="GO" id="GO:0005737">
    <property type="term" value="C:cytoplasm"/>
    <property type="evidence" value="ECO:0007669"/>
    <property type="project" value="UniProtKB-ARBA"/>
</dbReference>
<dbReference type="GO" id="GO:0000428">
    <property type="term" value="C:DNA-directed RNA polymerase complex"/>
    <property type="evidence" value="ECO:0007669"/>
    <property type="project" value="UniProtKB-KW"/>
</dbReference>
<dbReference type="GO" id="GO:0003677">
    <property type="term" value="F:DNA binding"/>
    <property type="evidence" value="ECO:0007669"/>
    <property type="project" value="UniProtKB-UniRule"/>
</dbReference>
<dbReference type="GO" id="GO:0003899">
    <property type="term" value="F:DNA-directed RNA polymerase activity"/>
    <property type="evidence" value="ECO:0007669"/>
    <property type="project" value="UniProtKB-UniRule"/>
</dbReference>
<dbReference type="GO" id="GO:0046983">
    <property type="term" value="F:protein dimerization activity"/>
    <property type="evidence" value="ECO:0007669"/>
    <property type="project" value="InterPro"/>
</dbReference>
<dbReference type="GO" id="GO:0006351">
    <property type="term" value="P:DNA-templated transcription"/>
    <property type="evidence" value="ECO:0007669"/>
    <property type="project" value="UniProtKB-UniRule"/>
</dbReference>
<dbReference type="CDD" id="cd06928">
    <property type="entry name" value="RNAP_alpha_NTD"/>
    <property type="match status" value="1"/>
</dbReference>
<dbReference type="FunFam" id="1.10.150.20:FF:000001">
    <property type="entry name" value="DNA-directed RNA polymerase subunit alpha"/>
    <property type="match status" value="1"/>
</dbReference>
<dbReference type="FunFam" id="2.170.120.12:FF:000001">
    <property type="entry name" value="DNA-directed RNA polymerase subunit alpha"/>
    <property type="match status" value="1"/>
</dbReference>
<dbReference type="Gene3D" id="1.10.150.20">
    <property type="entry name" value="5' to 3' exonuclease, C-terminal subdomain"/>
    <property type="match status" value="1"/>
</dbReference>
<dbReference type="Gene3D" id="2.170.120.12">
    <property type="entry name" value="DNA-directed RNA polymerase, insert domain"/>
    <property type="match status" value="1"/>
</dbReference>
<dbReference type="Gene3D" id="3.30.1360.10">
    <property type="entry name" value="RNA polymerase, RBP11-like subunit"/>
    <property type="match status" value="1"/>
</dbReference>
<dbReference type="HAMAP" id="MF_00059">
    <property type="entry name" value="RNApol_bact_RpoA"/>
    <property type="match status" value="1"/>
</dbReference>
<dbReference type="InterPro" id="IPR011262">
    <property type="entry name" value="DNA-dir_RNA_pol_insert"/>
</dbReference>
<dbReference type="InterPro" id="IPR011263">
    <property type="entry name" value="DNA-dir_RNA_pol_RpoA/D/Rpb3"/>
</dbReference>
<dbReference type="InterPro" id="IPR011773">
    <property type="entry name" value="DNA-dir_RpoA"/>
</dbReference>
<dbReference type="InterPro" id="IPR036603">
    <property type="entry name" value="RBP11-like"/>
</dbReference>
<dbReference type="InterPro" id="IPR011260">
    <property type="entry name" value="RNAP_asu_C"/>
</dbReference>
<dbReference type="InterPro" id="IPR036643">
    <property type="entry name" value="RNApol_insert_sf"/>
</dbReference>
<dbReference type="NCBIfam" id="NF003513">
    <property type="entry name" value="PRK05182.1-2"/>
    <property type="match status" value="1"/>
</dbReference>
<dbReference type="NCBIfam" id="NF003515">
    <property type="entry name" value="PRK05182.2-1"/>
    <property type="match status" value="1"/>
</dbReference>
<dbReference type="NCBIfam" id="NF003516">
    <property type="entry name" value="PRK05182.2-2"/>
    <property type="match status" value="1"/>
</dbReference>
<dbReference type="NCBIfam" id="NF003519">
    <property type="entry name" value="PRK05182.2-5"/>
    <property type="match status" value="1"/>
</dbReference>
<dbReference type="NCBIfam" id="TIGR02027">
    <property type="entry name" value="rpoA"/>
    <property type="match status" value="1"/>
</dbReference>
<dbReference type="Pfam" id="PF01000">
    <property type="entry name" value="RNA_pol_A_bac"/>
    <property type="match status" value="1"/>
</dbReference>
<dbReference type="Pfam" id="PF03118">
    <property type="entry name" value="RNA_pol_A_CTD"/>
    <property type="match status" value="1"/>
</dbReference>
<dbReference type="Pfam" id="PF01193">
    <property type="entry name" value="RNA_pol_L"/>
    <property type="match status" value="1"/>
</dbReference>
<dbReference type="SMART" id="SM00662">
    <property type="entry name" value="RPOLD"/>
    <property type="match status" value="1"/>
</dbReference>
<dbReference type="SUPFAM" id="SSF47789">
    <property type="entry name" value="C-terminal domain of RNA polymerase alpha subunit"/>
    <property type="match status" value="1"/>
</dbReference>
<dbReference type="SUPFAM" id="SSF56553">
    <property type="entry name" value="Insert subdomain of RNA polymerase alpha subunit"/>
    <property type="match status" value="1"/>
</dbReference>
<dbReference type="SUPFAM" id="SSF55257">
    <property type="entry name" value="RBP11-like subunits of RNA polymerase"/>
    <property type="match status" value="1"/>
</dbReference>
<accession>B9DYD7</accession>
<keyword id="KW-0240">DNA-directed RNA polymerase</keyword>
<keyword id="KW-0548">Nucleotidyltransferase</keyword>
<keyword id="KW-0804">Transcription</keyword>
<keyword id="KW-0808">Transferase</keyword>